<sequence length="175" mass="18981">MGLSLEQKKAMVQEVAAVAQEALTAVSAEYRGLTAGEMDQLRAQAREQGVYLRVVKNTLARRAVAGTEFECMTEGFYGPLLLAFSQDDPGAAARLVRDFRKKNESLVVRNVAFGGTLYGPEHLDRLASLPTRDEALSKLMATMRAPVQKLATTTNEVPGKLVRTLAAVRDAKEAA</sequence>
<proteinExistence type="inferred from homology"/>
<organism>
    <name type="scientific">Halorhodospira halophila (strain DSM 244 / SL1)</name>
    <name type="common">Ectothiorhodospira halophila (strain DSM 244 / SL1)</name>
    <dbReference type="NCBI Taxonomy" id="349124"/>
    <lineage>
        <taxon>Bacteria</taxon>
        <taxon>Pseudomonadati</taxon>
        <taxon>Pseudomonadota</taxon>
        <taxon>Gammaproteobacteria</taxon>
        <taxon>Chromatiales</taxon>
        <taxon>Ectothiorhodospiraceae</taxon>
        <taxon>Halorhodospira</taxon>
    </lineage>
</organism>
<feature type="chain" id="PRO_1000005509" description="Large ribosomal subunit protein uL10">
    <location>
        <begin position="1"/>
        <end position="175"/>
    </location>
</feature>
<reference key="1">
    <citation type="submission" date="2006-12" db="EMBL/GenBank/DDBJ databases">
        <title>Complete sequence of Halorhodospira halophila SL1.</title>
        <authorList>
            <consortium name="US DOE Joint Genome Institute"/>
            <person name="Copeland A."/>
            <person name="Lucas S."/>
            <person name="Lapidus A."/>
            <person name="Barry K."/>
            <person name="Detter J.C."/>
            <person name="Glavina del Rio T."/>
            <person name="Hammon N."/>
            <person name="Israni S."/>
            <person name="Dalin E."/>
            <person name="Tice H."/>
            <person name="Pitluck S."/>
            <person name="Saunders E."/>
            <person name="Brettin T."/>
            <person name="Bruce D."/>
            <person name="Han C."/>
            <person name="Tapia R."/>
            <person name="Schmutz J."/>
            <person name="Larimer F."/>
            <person name="Land M."/>
            <person name="Hauser L."/>
            <person name="Kyrpides N."/>
            <person name="Mikhailova N."/>
            <person name="Hoff W."/>
            <person name="Richardson P."/>
        </authorList>
    </citation>
    <scope>NUCLEOTIDE SEQUENCE [LARGE SCALE GENOMIC DNA]</scope>
    <source>
        <strain>DSM 244 / SL1</strain>
    </source>
</reference>
<keyword id="KW-1185">Reference proteome</keyword>
<keyword id="KW-0687">Ribonucleoprotein</keyword>
<keyword id="KW-0689">Ribosomal protein</keyword>
<keyword id="KW-0694">RNA-binding</keyword>
<keyword id="KW-0699">rRNA-binding</keyword>
<protein>
    <recommendedName>
        <fullName evidence="1">Large ribosomal subunit protein uL10</fullName>
    </recommendedName>
    <alternativeName>
        <fullName evidence="2">50S ribosomal protein L10</fullName>
    </alternativeName>
</protein>
<accession>A1WVD1</accession>
<name>RL10_HALHL</name>
<dbReference type="EMBL" id="CP000544">
    <property type="protein sequence ID" value="ABM61643.1"/>
    <property type="molecule type" value="Genomic_DNA"/>
</dbReference>
<dbReference type="RefSeq" id="WP_011813666.1">
    <property type="nucleotide sequence ID" value="NC_008789.1"/>
</dbReference>
<dbReference type="SMR" id="A1WVD1"/>
<dbReference type="STRING" id="349124.Hhal_0867"/>
<dbReference type="KEGG" id="hha:Hhal_0867"/>
<dbReference type="eggNOG" id="COG0244">
    <property type="taxonomic scope" value="Bacteria"/>
</dbReference>
<dbReference type="HOGENOM" id="CLU_092227_0_1_6"/>
<dbReference type="OrthoDB" id="9808307at2"/>
<dbReference type="Proteomes" id="UP000000647">
    <property type="component" value="Chromosome"/>
</dbReference>
<dbReference type="GO" id="GO:0015934">
    <property type="term" value="C:large ribosomal subunit"/>
    <property type="evidence" value="ECO:0007669"/>
    <property type="project" value="InterPro"/>
</dbReference>
<dbReference type="GO" id="GO:0070180">
    <property type="term" value="F:large ribosomal subunit rRNA binding"/>
    <property type="evidence" value="ECO:0007669"/>
    <property type="project" value="UniProtKB-UniRule"/>
</dbReference>
<dbReference type="GO" id="GO:0003735">
    <property type="term" value="F:structural constituent of ribosome"/>
    <property type="evidence" value="ECO:0007669"/>
    <property type="project" value="InterPro"/>
</dbReference>
<dbReference type="GO" id="GO:0006412">
    <property type="term" value="P:translation"/>
    <property type="evidence" value="ECO:0007669"/>
    <property type="project" value="UniProtKB-UniRule"/>
</dbReference>
<dbReference type="CDD" id="cd05797">
    <property type="entry name" value="Ribosomal_L10"/>
    <property type="match status" value="1"/>
</dbReference>
<dbReference type="Gene3D" id="3.30.70.1730">
    <property type="match status" value="1"/>
</dbReference>
<dbReference type="Gene3D" id="6.10.250.2350">
    <property type="match status" value="1"/>
</dbReference>
<dbReference type="HAMAP" id="MF_00362">
    <property type="entry name" value="Ribosomal_uL10"/>
    <property type="match status" value="1"/>
</dbReference>
<dbReference type="InterPro" id="IPR001790">
    <property type="entry name" value="Ribosomal_uL10"/>
</dbReference>
<dbReference type="InterPro" id="IPR043141">
    <property type="entry name" value="Ribosomal_uL10-like_sf"/>
</dbReference>
<dbReference type="InterPro" id="IPR022973">
    <property type="entry name" value="Ribosomal_uL10_bac"/>
</dbReference>
<dbReference type="InterPro" id="IPR047865">
    <property type="entry name" value="Ribosomal_uL10_bac_type"/>
</dbReference>
<dbReference type="InterPro" id="IPR002363">
    <property type="entry name" value="Ribosomal_uL10_CS_bac"/>
</dbReference>
<dbReference type="NCBIfam" id="NF000955">
    <property type="entry name" value="PRK00099.1-1"/>
    <property type="match status" value="1"/>
</dbReference>
<dbReference type="PANTHER" id="PTHR11560">
    <property type="entry name" value="39S RIBOSOMAL PROTEIN L10, MITOCHONDRIAL"/>
    <property type="match status" value="1"/>
</dbReference>
<dbReference type="Pfam" id="PF00466">
    <property type="entry name" value="Ribosomal_L10"/>
    <property type="match status" value="1"/>
</dbReference>
<dbReference type="SUPFAM" id="SSF160369">
    <property type="entry name" value="Ribosomal protein L10-like"/>
    <property type="match status" value="1"/>
</dbReference>
<dbReference type="PROSITE" id="PS01109">
    <property type="entry name" value="RIBOSOMAL_L10"/>
    <property type="match status" value="1"/>
</dbReference>
<gene>
    <name evidence="1" type="primary">rplJ</name>
    <name type="ordered locus">Hhal_0867</name>
</gene>
<comment type="function">
    <text evidence="1">Forms part of the ribosomal stalk, playing a central role in the interaction of the ribosome with GTP-bound translation factors.</text>
</comment>
<comment type="subunit">
    <text evidence="1">Part of the ribosomal stalk of the 50S ribosomal subunit. The N-terminus interacts with L11 and the large rRNA to form the base of the stalk. The C-terminus forms an elongated spine to which L12 dimers bind in a sequential fashion forming a multimeric L10(L12)X complex.</text>
</comment>
<comment type="similarity">
    <text evidence="1">Belongs to the universal ribosomal protein uL10 family.</text>
</comment>
<evidence type="ECO:0000255" key="1">
    <source>
        <dbReference type="HAMAP-Rule" id="MF_00362"/>
    </source>
</evidence>
<evidence type="ECO:0000305" key="2"/>